<dbReference type="EC" id="1.1.-.-" evidence="9"/>
<dbReference type="SMR" id="P0DO29"/>
<dbReference type="GlyCosmos" id="P0DO29">
    <property type="glycosylation" value="14 sites, No reported glycans"/>
</dbReference>
<dbReference type="GO" id="GO:0050660">
    <property type="term" value="F:flavin adenine dinucleotide binding"/>
    <property type="evidence" value="ECO:0007669"/>
    <property type="project" value="InterPro"/>
</dbReference>
<dbReference type="GO" id="GO:0016614">
    <property type="term" value="F:oxidoreductase activity, acting on CH-OH group of donors"/>
    <property type="evidence" value="ECO:0007669"/>
    <property type="project" value="InterPro"/>
</dbReference>
<dbReference type="Gene3D" id="3.50.50.60">
    <property type="entry name" value="FAD/NAD(P)-binding domain"/>
    <property type="match status" value="1"/>
</dbReference>
<dbReference type="Gene3D" id="3.30.560.10">
    <property type="entry name" value="Glucose Oxidase, domain 3"/>
    <property type="match status" value="1"/>
</dbReference>
<dbReference type="InterPro" id="IPR036188">
    <property type="entry name" value="FAD/NAD-bd_sf"/>
</dbReference>
<dbReference type="InterPro" id="IPR012132">
    <property type="entry name" value="GMC_OxRdtase"/>
</dbReference>
<dbReference type="InterPro" id="IPR000172">
    <property type="entry name" value="GMC_OxRdtase_N"/>
</dbReference>
<dbReference type="InterPro" id="IPR007867">
    <property type="entry name" value="GMC_OxRtase_C"/>
</dbReference>
<dbReference type="PANTHER" id="PTHR11552">
    <property type="entry name" value="GLUCOSE-METHANOL-CHOLINE GMC OXIDOREDUCTASE"/>
    <property type="match status" value="1"/>
</dbReference>
<dbReference type="PANTHER" id="PTHR11552:SF201">
    <property type="entry name" value="GLUCOSE-METHANOL-CHOLINE OXIDOREDUCTASE N-TERMINAL DOMAIN-CONTAINING PROTEIN"/>
    <property type="match status" value="1"/>
</dbReference>
<dbReference type="Pfam" id="PF05199">
    <property type="entry name" value="GMC_oxred_C"/>
    <property type="match status" value="1"/>
</dbReference>
<dbReference type="Pfam" id="PF00732">
    <property type="entry name" value="GMC_oxred_N"/>
    <property type="match status" value="1"/>
</dbReference>
<dbReference type="PIRSF" id="PIRSF000137">
    <property type="entry name" value="Alcohol_oxidase"/>
    <property type="match status" value="1"/>
</dbReference>
<dbReference type="SUPFAM" id="SSF54373">
    <property type="entry name" value="FAD-linked reductases, C-terminal domain"/>
    <property type="match status" value="1"/>
</dbReference>
<dbReference type="SUPFAM" id="SSF51905">
    <property type="entry name" value="FAD/NAD(P)-binding domain"/>
    <property type="match status" value="1"/>
</dbReference>
<dbReference type="PROSITE" id="PS00623">
    <property type="entry name" value="GMC_OXRED_1"/>
    <property type="match status" value="1"/>
</dbReference>
<dbReference type="PROSITE" id="PS00624">
    <property type="entry name" value="GMC_OXRED_2"/>
    <property type="match status" value="1"/>
</dbReference>
<evidence type="ECO:0000250" key="1">
    <source>
        <dbReference type="UniProtKB" id="E4QP00"/>
    </source>
</evidence>
<evidence type="ECO:0000250" key="2">
    <source>
        <dbReference type="UniProtKB" id="Q12062"/>
    </source>
</evidence>
<evidence type="ECO:0000255" key="3"/>
<evidence type="ECO:0000255" key="4">
    <source>
        <dbReference type="PROSITE-ProRule" id="PRU00498"/>
    </source>
</evidence>
<evidence type="ECO:0000269" key="5">
    <source>
    </source>
</evidence>
<evidence type="ECO:0000269" key="6">
    <source>
    </source>
</evidence>
<evidence type="ECO:0000303" key="7">
    <source>
    </source>
</evidence>
<evidence type="ECO:0000305" key="8"/>
<evidence type="ECO:0000305" key="9">
    <source>
    </source>
</evidence>
<gene>
    <name evidence="7" type="primary">eriK</name>
</gene>
<feature type="signal peptide" evidence="3">
    <location>
        <begin position="1"/>
        <end position="20"/>
    </location>
</feature>
<feature type="chain" id="PRO_0000452928" description="Dehydrogenase eriK">
    <location>
        <begin position="21"/>
        <end position="599"/>
    </location>
</feature>
<feature type="binding site" evidence="1">
    <location>
        <begin position="43"/>
        <end position="44"/>
    </location>
    <ligand>
        <name>FAD</name>
        <dbReference type="ChEBI" id="CHEBI:57692"/>
    </ligand>
</feature>
<feature type="binding site" evidence="1">
    <location>
        <begin position="64"/>
        <end position="65"/>
    </location>
    <ligand>
        <name>FAD</name>
        <dbReference type="ChEBI" id="CHEBI:57692"/>
    </ligand>
</feature>
<feature type="binding site" evidence="1">
    <location>
        <begin position="122"/>
        <end position="125"/>
    </location>
    <ligand>
        <name>FAD</name>
        <dbReference type="ChEBI" id="CHEBI:57692"/>
    </ligand>
</feature>
<feature type="binding site" evidence="1">
    <location>
        <position position="569"/>
    </location>
    <ligand>
        <name>FAD</name>
        <dbReference type="ChEBI" id="CHEBI:57692"/>
    </ligand>
</feature>
<feature type="binding site" evidence="1">
    <location>
        <begin position="580"/>
        <end position="581"/>
    </location>
    <ligand>
        <name>FAD</name>
        <dbReference type="ChEBI" id="CHEBI:57692"/>
    </ligand>
</feature>
<feature type="glycosylation site" description="N-linked (GlcNAc...) asparagine" evidence="4">
    <location>
        <position position="93"/>
    </location>
</feature>
<feature type="glycosylation site" description="N-linked (GlcNAc...) asparagine" evidence="4">
    <location>
        <position position="169"/>
    </location>
</feature>
<feature type="glycosylation site" description="N-linked (GlcNAc...) asparagine" evidence="4">
    <location>
        <position position="191"/>
    </location>
</feature>
<feature type="glycosylation site" description="N-linked (GlcNAc...) asparagine" evidence="4">
    <location>
        <position position="234"/>
    </location>
</feature>
<feature type="glycosylation site" description="N-linked (GlcNAc...) asparagine" evidence="4">
    <location>
        <position position="260"/>
    </location>
</feature>
<feature type="glycosylation site" description="N-linked (GlcNAc...) asparagine" evidence="4">
    <location>
        <position position="284"/>
    </location>
</feature>
<feature type="glycosylation site" description="N-linked (GlcNAc...) asparagine" evidence="4">
    <location>
        <position position="319"/>
    </location>
</feature>
<feature type="glycosylation site" description="N-linked (GlcNAc...) asparagine" evidence="4">
    <location>
        <position position="339"/>
    </location>
</feature>
<feature type="glycosylation site" description="N-linked (GlcNAc...) asparagine" evidence="4">
    <location>
        <position position="353"/>
    </location>
</feature>
<feature type="glycosylation site" description="N-linked (GlcNAc...) asparagine" evidence="4">
    <location>
        <position position="365"/>
    </location>
</feature>
<feature type="glycosylation site" description="N-linked (GlcNAc...) asparagine" evidence="4">
    <location>
        <position position="370"/>
    </location>
</feature>
<feature type="glycosylation site" description="N-linked (GlcNAc...) asparagine" evidence="4">
    <location>
        <position position="398"/>
    </location>
</feature>
<feature type="glycosylation site" description="N-linked (GlcNAc...) asparagine" evidence="4">
    <location>
        <position position="456"/>
    </location>
</feature>
<feature type="glycosylation site" description="N-linked (GlcNAc...) asparagine" evidence="4">
    <location>
        <position position="518"/>
    </location>
</feature>
<reference key="1">
    <citation type="journal article" date="2019" name="J. Am. Chem. Soc.">
        <title>Efficient reconstitution of basidiomycota diterpene erinacine gene cluster in ascomycota host Aspergillus oryzae based on genomic DNA sequences.</title>
        <authorList>
            <person name="Liu C."/>
            <person name="Minami A."/>
            <person name="Ozaki T."/>
            <person name="Wu J."/>
            <person name="Kawagishi H."/>
            <person name="Maruyama J.I."/>
            <person name="Oikawa H."/>
        </authorList>
    </citation>
    <scope>NUCLEOTIDE SEQUENCE [GENOMIC DNA]</scope>
    <scope>FUNCTION</scope>
</reference>
<reference key="2">
    <citation type="journal article" date="2017" name="Angew. Chem. Int. Ed.">
        <title>Discovery and characterization of a new family of diterpene cyclases in bacteria and fungi.</title>
        <authorList>
            <person name="Yang Y.L."/>
            <person name="Zhang S."/>
            <person name="Ma K."/>
            <person name="Xu Y."/>
            <person name="Tao Q."/>
            <person name="Chen Y."/>
            <person name="Chen J."/>
            <person name="Guo S."/>
            <person name="Ren J."/>
            <person name="Wang W."/>
            <person name="Tao Y."/>
            <person name="Yin W.B."/>
            <person name="Liu H."/>
        </authorList>
    </citation>
    <scope>FUNCTION</scope>
</reference>
<accession>P0DO29</accession>
<name>ERIK_HERER</name>
<sequence length="599" mass="63976">MAFLKARLAALLSVAVSCSAVLYDDAKKLPSTSYDYIVVGGGTAGSVLANRLTEDAKTQVLVLEGGPSGQGVLELEIPFYNLYGPHDPLWNWNISVLPQDTAADRVLVYPAGRVLGGTSMINGMYYSRGPSSDWDRMAAITGDSGWSWDKIYPYFIKSEVLTPSVGGRNTTGELDPSIHGKQGIVATSSPNWSYETDPLIISALNELGGPYSPILDFNNGSPLGVAWFQYTMRNGSREDAATSYFADKFLGRSNLHVLVNATVDRVVQSKSGGPVNGVEYHLSNGTGSTLHATANKEVIVSAGTFGTPHLLLNSGIGDNSTLASYNVTPIAHVPDVGKNLTDYSTVILTWSVNSTTTLYDLITKNETFANDSLAQWTASHTGPFSNGVSNHMFNLRLNETDPEVQQMLKQYGDPSSSDKAPHITLQFVEGGLGSGNSISMENFVVTPLSRGSVTLNTTDPSGPPVVDAGILTSPFDVFVLEQGILAARKFLSASAWDNYIIAPASGLDAGIPVDGSVNTTALESYIRTQATAGWRETGTAKMSPKGARWGVVDPDFRVKNVQGLRVVDASVFPEIPSLHTQIPIYAIAERAADLIKGSH</sequence>
<comment type="function">
    <text evidence="5 6 9">Dehydrogenase; part of the gene cluster that mediates the biosynthesis of erinacines, cyathane-xylosides that show unique biological activities, including leishmanicidal activity, stimulating activity for nerve growth-factor synthesis, and agonistic activity toward the kappa opioid receptor (PubMed:28371074, PubMed:31535864). The role of the dehydrogenase eriK within the pathway has still to be determined (Probable). The first step of the erinacines biosynthesis pathway is catalyzed by the geranylgeranyl diphosphate (GGPP) synthase eriE via conversion of farnesyl pyrophosphate and isopentyl pyrophosphate into geranylgeranyl pyrophosphate (GGPP). GGPP is then substrate of the diterpene cyclase eriG for the production of cyatha-3,12-diene. The cytochrome P450 monooxygenase eriI then hydroxylates cyatha-3,12-diene at C-14 of the seven-membered ring to produce erinacol, which is further hydroxylated at C-15 by the cytochrome P450 monooxygenase eriC to yield cyathadiol. The cytochrome P450 monooxygenase eriA then catalyzes C-11 hydroxylation in the presence of the short chain dehydrogenase/reductase (SDR) eriH, which leads to the production of cyathatriol. The acetyltransferase eriL converts cyathatriol into 11-O-acetyl-cyathatriol. The SDR eriH catalyzes further oxidation of 11-O-acetyl-cyathatriol into 1-O-acetylcyathin A3. Finally, the glycosyl transferase eriJ tranfers xylose from UDP-xylose onto C-14 of 11-O-acetyl-cyathatriol to form eracine Q. EriJ is also able to convert 11-O-acetyl-cyathatriol to eracine Q2 by using UDP-D-glucose as cosubstrate, but at a lower rate (Probable).</text>
</comment>
<comment type="cofactor">
    <cofactor evidence="1">
        <name>FAD</name>
        <dbReference type="ChEBI" id="CHEBI:57692"/>
    </cofactor>
</comment>
<comment type="subunit">
    <text evidence="2">Homodimer.</text>
</comment>
<comment type="similarity">
    <text evidence="8">Belongs to the GMC oxidoreductase family.</text>
</comment>
<keyword id="KW-0274">FAD</keyword>
<keyword id="KW-0285">Flavoprotein</keyword>
<keyword id="KW-0325">Glycoprotein</keyword>
<keyword id="KW-0560">Oxidoreductase</keyword>
<keyword id="KW-0732">Signal</keyword>
<proteinExistence type="inferred from homology"/>
<organism>
    <name type="scientific">Hericium erinaceus</name>
    <name type="common">Lion's mane mushroom</name>
    <name type="synonym">Hydnum erinaceus</name>
    <dbReference type="NCBI Taxonomy" id="91752"/>
    <lineage>
        <taxon>Eukaryota</taxon>
        <taxon>Fungi</taxon>
        <taxon>Dikarya</taxon>
        <taxon>Basidiomycota</taxon>
        <taxon>Agaricomycotina</taxon>
        <taxon>Agaricomycetes</taxon>
        <taxon>Russulales</taxon>
        <taxon>Hericiaceae</taxon>
        <taxon>Hericium</taxon>
    </lineage>
</organism>
<protein>
    <recommendedName>
        <fullName evidence="7">Dehydrogenase eriK</fullName>
        <ecNumber evidence="9">1.1.-.-</ecNumber>
    </recommendedName>
    <alternativeName>
        <fullName evidence="7">Erinacine biosynthesis cluster protein K</fullName>
    </alternativeName>
</protein>